<organism>
    <name type="scientific">Desulforapulum autotrophicum (strain ATCC 43914 / DSM 3382 / VKM B-1955 / HRM2)</name>
    <name type="common">Desulfobacterium autotrophicum</name>
    <dbReference type="NCBI Taxonomy" id="177437"/>
    <lineage>
        <taxon>Bacteria</taxon>
        <taxon>Pseudomonadati</taxon>
        <taxon>Thermodesulfobacteriota</taxon>
        <taxon>Desulfobacteria</taxon>
        <taxon>Desulfobacterales</taxon>
        <taxon>Desulfobacteraceae</taxon>
        <taxon>Desulforapulum</taxon>
    </lineage>
</organism>
<proteinExistence type="inferred from homology"/>
<sequence>MAKIRVYELAKKLNMTNKALLTKLKAMNIEAKSHMSSLEDDTEARVRESLHGMKNKQADTRVKSSVIRRRRPPKPEPSVTELPDDEAAGSNGAAEEKITTPGPVTGDEMTETSTPAPVKSKIPLKAQTDSTNRPTPEDPVVKATELKPKKVTKPKSSPARVILRPDTPAKEEPTKAKEVPAAKEVPAAKEAPKVKETSKAVNVSEDEVNPLPTKNVELNSGDSKPDGALEEKSETDEKALEKEPTIKQEDTILEDNHARKEVRSVAVDDDDKNLDTAEAKDKKRKKKKVQKRSEPAKIIKMAVPISVRSRNKVKTEATQAPTSPQRPKVHPKPADKGPARAQAHRPDTGRDAVVLPGEGDGEVKRSKKKEWKKKGVGGPGVEFAPKGAPRKRKSVVEGKDLYEKGRSGKKGRRKDGRVKKTKTMKTQITVPKAIKRRIKIDEVIELSELAKRMGIKANEMIVKLMGMGVMATVNQTIDFDTACLVAAEFDYEVEKASVEEDIVLQVQEAEIDPDKLVSRPPVVTIMGHVDHGKTSLLDVIRKSKVATGEAGGITQHIGAYRVKTKKGTITFLDTPGHAAFTSMRSRGAQVTDLVVLVVAADDGVMPQTIEAINHSKAANVPVVVAVNKMDKPGADPDKVMRELSEHGLLAEDWGGDVIFAKVSAKTGKGIDGLLEMILLQSEVLELKANPDSPATGHVVEARLDAGRGPVATILVNQGTLKAGQPVVCGLYSGKIRVMIDDMGDDVEFAGPSTPVEIVGLSGVPEAGDEFVALDSEKDAKQVSDSRMQKQRAKVLAKRSRANLEKLFESMGADEIKELKLIIKADVHGSLEALNDSIMKLAQDEVDITIVHSGTGAINESDVSLAAVSDAIIIGFNVRPTPKVRSMAKDENVDMRFYDIIYNVINDIKAAITGLMPSTFHEVIIGRAEVRDTFVIPHKGLTIGGSFVLEGKIARGFKVRLLRDGVVKCDSTLSSLRRFKDDVKEVAHGYECGIGIERYNDIKIGDIFECYEIEERKAQVEQIKE</sequence>
<accession>C0QHM2</accession>
<reference key="1">
    <citation type="journal article" date="2009" name="Environ. Microbiol.">
        <title>Genome sequence of Desulfobacterium autotrophicum HRM2, a marine sulfate reducer oxidizing organic carbon completely to carbon dioxide.</title>
        <authorList>
            <person name="Strittmatter A.W."/>
            <person name="Liesegang H."/>
            <person name="Rabus R."/>
            <person name="Decker I."/>
            <person name="Amann J."/>
            <person name="Andres S."/>
            <person name="Henne A."/>
            <person name="Fricke W.F."/>
            <person name="Martinez-Arias R."/>
            <person name="Bartels D."/>
            <person name="Goesmann A."/>
            <person name="Krause L."/>
            <person name="Puehler A."/>
            <person name="Klenk H.P."/>
            <person name="Richter M."/>
            <person name="Schuler M."/>
            <person name="Gloeckner F.O."/>
            <person name="Meyerdierks A."/>
            <person name="Gottschalk G."/>
            <person name="Amann R."/>
        </authorList>
    </citation>
    <scope>NUCLEOTIDE SEQUENCE [LARGE SCALE GENOMIC DNA]</scope>
    <source>
        <strain>ATCC 43914 / DSM 3382 / VKM B-1955 / HRM2</strain>
    </source>
</reference>
<keyword id="KW-0963">Cytoplasm</keyword>
<keyword id="KW-0342">GTP-binding</keyword>
<keyword id="KW-0396">Initiation factor</keyword>
<keyword id="KW-0547">Nucleotide-binding</keyword>
<keyword id="KW-0648">Protein biosynthesis</keyword>
<keyword id="KW-1185">Reference proteome</keyword>
<name>IF2_DESAH</name>
<evidence type="ECO:0000250" key="1"/>
<evidence type="ECO:0000255" key="2">
    <source>
        <dbReference type="HAMAP-Rule" id="MF_00100"/>
    </source>
</evidence>
<evidence type="ECO:0000256" key="3">
    <source>
        <dbReference type="SAM" id="MobiDB-lite"/>
    </source>
</evidence>
<gene>
    <name evidence="2" type="primary">infB</name>
    <name type="ordered locus">HRM2_04660</name>
</gene>
<comment type="function">
    <text evidence="2">One of the essential components for the initiation of protein synthesis. Protects formylmethionyl-tRNA from spontaneous hydrolysis and promotes its binding to the 30S ribosomal subunits. Also involved in the hydrolysis of GTP during the formation of the 70S ribosomal complex.</text>
</comment>
<comment type="subcellular location">
    <subcellularLocation>
        <location evidence="2">Cytoplasm</location>
    </subcellularLocation>
</comment>
<comment type="similarity">
    <text evidence="2">Belongs to the TRAFAC class translation factor GTPase superfamily. Classic translation factor GTPase family. IF-2 subfamily.</text>
</comment>
<feature type="chain" id="PRO_1000202769" description="Translation initiation factor IF-2">
    <location>
        <begin position="1"/>
        <end position="1024"/>
    </location>
</feature>
<feature type="domain" description="tr-type G">
    <location>
        <begin position="518"/>
        <end position="687"/>
    </location>
</feature>
<feature type="region of interest" description="Disordered" evidence="3">
    <location>
        <begin position="33"/>
        <end position="425"/>
    </location>
</feature>
<feature type="region of interest" description="G1" evidence="1">
    <location>
        <begin position="527"/>
        <end position="534"/>
    </location>
</feature>
<feature type="region of interest" description="G2" evidence="1">
    <location>
        <begin position="552"/>
        <end position="556"/>
    </location>
</feature>
<feature type="region of interest" description="G3" evidence="1">
    <location>
        <begin position="573"/>
        <end position="576"/>
    </location>
</feature>
<feature type="region of interest" description="G4" evidence="1">
    <location>
        <begin position="627"/>
        <end position="630"/>
    </location>
</feature>
<feature type="region of interest" description="G5" evidence="1">
    <location>
        <begin position="663"/>
        <end position="665"/>
    </location>
</feature>
<feature type="compositionally biased region" description="Basic and acidic residues" evidence="3">
    <location>
        <begin position="43"/>
        <end position="62"/>
    </location>
</feature>
<feature type="compositionally biased region" description="Basic and acidic residues" evidence="3">
    <location>
        <begin position="135"/>
        <end position="148"/>
    </location>
</feature>
<feature type="compositionally biased region" description="Basic and acidic residues" evidence="3">
    <location>
        <begin position="167"/>
        <end position="198"/>
    </location>
</feature>
<feature type="compositionally biased region" description="Basic and acidic residues" evidence="3">
    <location>
        <begin position="223"/>
        <end position="263"/>
    </location>
</feature>
<feature type="compositionally biased region" description="Polar residues" evidence="3">
    <location>
        <begin position="316"/>
        <end position="325"/>
    </location>
</feature>
<feature type="compositionally biased region" description="Basic and acidic residues" evidence="3">
    <location>
        <begin position="332"/>
        <end position="350"/>
    </location>
</feature>
<feature type="compositionally biased region" description="Basic residues" evidence="3">
    <location>
        <begin position="365"/>
        <end position="375"/>
    </location>
</feature>
<feature type="compositionally biased region" description="Basic and acidic residues" evidence="3">
    <location>
        <begin position="394"/>
        <end position="406"/>
    </location>
</feature>
<feature type="compositionally biased region" description="Basic residues" evidence="3">
    <location>
        <begin position="407"/>
        <end position="423"/>
    </location>
</feature>
<feature type="binding site" evidence="2">
    <location>
        <begin position="527"/>
        <end position="534"/>
    </location>
    <ligand>
        <name>GTP</name>
        <dbReference type="ChEBI" id="CHEBI:37565"/>
    </ligand>
</feature>
<feature type="binding site" evidence="2">
    <location>
        <begin position="573"/>
        <end position="577"/>
    </location>
    <ligand>
        <name>GTP</name>
        <dbReference type="ChEBI" id="CHEBI:37565"/>
    </ligand>
</feature>
<feature type="binding site" evidence="2">
    <location>
        <begin position="627"/>
        <end position="630"/>
    </location>
    <ligand>
        <name>GTP</name>
        <dbReference type="ChEBI" id="CHEBI:37565"/>
    </ligand>
</feature>
<dbReference type="EMBL" id="CP001087">
    <property type="protein sequence ID" value="ACN13580.1"/>
    <property type="molecule type" value="Genomic_DNA"/>
</dbReference>
<dbReference type="RefSeq" id="WP_012662829.1">
    <property type="nucleotide sequence ID" value="NC_012108.1"/>
</dbReference>
<dbReference type="SMR" id="C0QHM2"/>
<dbReference type="STRING" id="177437.HRM2_04660"/>
<dbReference type="KEGG" id="dat:HRM2_04660"/>
<dbReference type="eggNOG" id="COG0532">
    <property type="taxonomic scope" value="Bacteria"/>
</dbReference>
<dbReference type="HOGENOM" id="CLU_006301_5_1_7"/>
<dbReference type="OrthoDB" id="9811804at2"/>
<dbReference type="Proteomes" id="UP000000442">
    <property type="component" value="Chromosome"/>
</dbReference>
<dbReference type="GO" id="GO:0005829">
    <property type="term" value="C:cytosol"/>
    <property type="evidence" value="ECO:0007669"/>
    <property type="project" value="TreeGrafter"/>
</dbReference>
<dbReference type="GO" id="GO:0005525">
    <property type="term" value="F:GTP binding"/>
    <property type="evidence" value="ECO:0007669"/>
    <property type="project" value="UniProtKB-KW"/>
</dbReference>
<dbReference type="GO" id="GO:0003924">
    <property type="term" value="F:GTPase activity"/>
    <property type="evidence" value="ECO:0007669"/>
    <property type="project" value="UniProtKB-UniRule"/>
</dbReference>
<dbReference type="GO" id="GO:0003743">
    <property type="term" value="F:translation initiation factor activity"/>
    <property type="evidence" value="ECO:0007669"/>
    <property type="project" value="UniProtKB-UniRule"/>
</dbReference>
<dbReference type="CDD" id="cd01887">
    <property type="entry name" value="IF2_eIF5B"/>
    <property type="match status" value="1"/>
</dbReference>
<dbReference type="CDD" id="cd03702">
    <property type="entry name" value="IF2_mtIF2_II"/>
    <property type="match status" value="1"/>
</dbReference>
<dbReference type="CDD" id="cd03692">
    <property type="entry name" value="mtIF2_IVc"/>
    <property type="match status" value="1"/>
</dbReference>
<dbReference type="FunFam" id="2.40.30.10:FF:000007">
    <property type="entry name" value="Translation initiation factor IF-2"/>
    <property type="match status" value="1"/>
</dbReference>
<dbReference type="FunFam" id="2.40.30.10:FF:000008">
    <property type="entry name" value="Translation initiation factor IF-2"/>
    <property type="match status" value="1"/>
</dbReference>
<dbReference type="FunFam" id="3.40.50.10050:FF:000001">
    <property type="entry name" value="Translation initiation factor IF-2"/>
    <property type="match status" value="1"/>
</dbReference>
<dbReference type="FunFam" id="3.40.50.300:FF:000019">
    <property type="entry name" value="Translation initiation factor IF-2"/>
    <property type="match status" value="1"/>
</dbReference>
<dbReference type="Gene3D" id="1.10.10.2480">
    <property type="match status" value="1"/>
</dbReference>
<dbReference type="Gene3D" id="3.40.50.300">
    <property type="entry name" value="P-loop containing nucleotide triphosphate hydrolases"/>
    <property type="match status" value="1"/>
</dbReference>
<dbReference type="Gene3D" id="2.40.30.10">
    <property type="entry name" value="Translation factors"/>
    <property type="match status" value="2"/>
</dbReference>
<dbReference type="Gene3D" id="3.40.50.10050">
    <property type="entry name" value="Translation initiation factor IF- 2, domain 3"/>
    <property type="match status" value="1"/>
</dbReference>
<dbReference type="HAMAP" id="MF_00100_B">
    <property type="entry name" value="IF_2_B"/>
    <property type="match status" value="1"/>
</dbReference>
<dbReference type="InterPro" id="IPR053905">
    <property type="entry name" value="EF-G-like_DII"/>
</dbReference>
<dbReference type="InterPro" id="IPR044145">
    <property type="entry name" value="IF2_II"/>
</dbReference>
<dbReference type="InterPro" id="IPR006847">
    <property type="entry name" value="IF2_N"/>
</dbReference>
<dbReference type="InterPro" id="IPR027417">
    <property type="entry name" value="P-loop_NTPase"/>
</dbReference>
<dbReference type="InterPro" id="IPR005225">
    <property type="entry name" value="Small_GTP-bd"/>
</dbReference>
<dbReference type="InterPro" id="IPR000795">
    <property type="entry name" value="T_Tr_GTP-bd_dom"/>
</dbReference>
<dbReference type="InterPro" id="IPR000178">
    <property type="entry name" value="TF_IF2_bacterial-like"/>
</dbReference>
<dbReference type="InterPro" id="IPR015760">
    <property type="entry name" value="TIF_IF2"/>
</dbReference>
<dbReference type="InterPro" id="IPR023115">
    <property type="entry name" value="TIF_IF2_dom3"/>
</dbReference>
<dbReference type="InterPro" id="IPR036925">
    <property type="entry name" value="TIF_IF2_dom3_sf"/>
</dbReference>
<dbReference type="InterPro" id="IPR009000">
    <property type="entry name" value="Transl_B-barrel_sf"/>
</dbReference>
<dbReference type="NCBIfam" id="TIGR00487">
    <property type="entry name" value="IF-2"/>
    <property type="match status" value="1"/>
</dbReference>
<dbReference type="NCBIfam" id="TIGR00231">
    <property type="entry name" value="small_GTP"/>
    <property type="match status" value="1"/>
</dbReference>
<dbReference type="PANTHER" id="PTHR43381:SF5">
    <property type="entry name" value="TR-TYPE G DOMAIN-CONTAINING PROTEIN"/>
    <property type="match status" value="1"/>
</dbReference>
<dbReference type="PANTHER" id="PTHR43381">
    <property type="entry name" value="TRANSLATION INITIATION FACTOR IF-2-RELATED"/>
    <property type="match status" value="1"/>
</dbReference>
<dbReference type="Pfam" id="PF22042">
    <property type="entry name" value="EF-G_D2"/>
    <property type="match status" value="1"/>
</dbReference>
<dbReference type="Pfam" id="PF00009">
    <property type="entry name" value="GTP_EFTU"/>
    <property type="match status" value="1"/>
</dbReference>
<dbReference type="Pfam" id="PF11987">
    <property type="entry name" value="IF-2"/>
    <property type="match status" value="1"/>
</dbReference>
<dbReference type="Pfam" id="PF04760">
    <property type="entry name" value="IF2_N"/>
    <property type="match status" value="2"/>
</dbReference>
<dbReference type="SUPFAM" id="SSF52156">
    <property type="entry name" value="Initiation factor IF2/eIF5b, domain 3"/>
    <property type="match status" value="1"/>
</dbReference>
<dbReference type="SUPFAM" id="SSF52540">
    <property type="entry name" value="P-loop containing nucleoside triphosphate hydrolases"/>
    <property type="match status" value="1"/>
</dbReference>
<dbReference type="SUPFAM" id="SSF50447">
    <property type="entry name" value="Translation proteins"/>
    <property type="match status" value="2"/>
</dbReference>
<dbReference type="PROSITE" id="PS51722">
    <property type="entry name" value="G_TR_2"/>
    <property type="match status" value="1"/>
</dbReference>
<dbReference type="PROSITE" id="PS01176">
    <property type="entry name" value="IF2"/>
    <property type="match status" value="1"/>
</dbReference>
<protein>
    <recommendedName>
        <fullName evidence="2">Translation initiation factor IF-2</fullName>
    </recommendedName>
</protein>